<comment type="function">
    <text evidence="2">Catalyzes the oxidation of mono- and o-diphenols to o-diquinones.</text>
</comment>
<comment type="catalytic activity">
    <reaction evidence="2">
        <text>2 catechol + O2 = 2 1,2-benzoquinone + 2 H2O</text>
        <dbReference type="Rhea" id="RHEA:21632"/>
        <dbReference type="ChEBI" id="CHEBI:15377"/>
        <dbReference type="ChEBI" id="CHEBI:15379"/>
        <dbReference type="ChEBI" id="CHEBI:17253"/>
        <dbReference type="ChEBI" id="CHEBI:18135"/>
        <dbReference type="EC" id="1.10.3.1"/>
    </reaction>
</comment>
<comment type="cofactor">
    <cofactor evidence="1">
        <name>Cu(2+)</name>
        <dbReference type="ChEBI" id="CHEBI:29036"/>
    </cofactor>
    <text evidence="1">Binds 2 copper ions per subunit.</text>
</comment>
<comment type="biophysicochemical properties">
    <phDependence>
        <text evidence="2">Optimum pH is 4.5. Active from pH 3.0 to 8.0. The activity decreases sharply above pH 7.5.</text>
    </phDependence>
    <temperatureDependence>
        <text evidence="2">Optimum temperature is 60 degrees Celsius. There is only a slight decrease in activity at 75 degrees Celsius and a sharp decrease in activity at 90 degrees Celsius.</text>
    </temperatureDependence>
</comment>
<comment type="subunit">
    <text evidence="2">Homodimer.</text>
</comment>
<comment type="tissue specificity">
    <text evidence="2">Expressed in the rhizome. Not detected in leaves.</text>
</comment>
<comment type="developmental stage">
    <text evidence="2">Expressed throughout rhizome development.</text>
</comment>
<comment type="PTM">
    <text evidence="2">Glycosylated.</text>
</comment>
<comment type="similarity">
    <text evidence="2">Belongs to the tyrosinase family.</text>
</comment>
<name>PPO_ZINOF</name>
<sequence>EQGVGGDDGL</sequence>
<proteinExistence type="evidence at protein level"/>
<keyword id="KW-0186">Copper</keyword>
<keyword id="KW-0903">Direct protein sequencing</keyword>
<keyword id="KW-0479">Metal-binding</keyword>
<keyword id="KW-0560">Oxidoreductase</keyword>
<organism>
    <name type="scientific">Zingiber officinale</name>
    <name type="common">Ginger</name>
    <name type="synonym">Amomum zingiber</name>
    <dbReference type="NCBI Taxonomy" id="94328"/>
    <lineage>
        <taxon>Eukaryota</taxon>
        <taxon>Viridiplantae</taxon>
        <taxon>Streptophyta</taxon>
        <taxon>Embryophyta</taxon>
        <taxon>Tracheophyta</taxon>
        <taxon>Spermatophyta</taxon>
        <taxon>Magnoliopsida</taxon>
        <taxon>Liliopsida</taxon>
        <taxon>Zingiberales</taxon>
        <taxon>Zingiberaceae</taxon>
        <taxon>Zingiber</taxon>
    </lineage>
</organism>
<protein>
    <recommendedName>
        <fullName>Polyphenol oxidase</fullName>
        <shortName>PPO</shortName>
        <ecNumber>1.10.3.1</ecNumber>
    </recommendedName>
    <alternativeName>
        <fullName>Catechol oxidase</fullName>
    </alternativeName>
</protein>
<feature type="chain" id="PRO_0000259621" description="Polyphenol oxidase">
    <location>
        <begin position="1"/>
        <end position="10" status="greater than"/>
    </location>
</feature>
<feature type="non-terminal residue" evidence="3">
    <location>
        <position position="10"/>
    </location>
</feature>
<reference evidence="4" key="1">
    <citation type="submission" date="2006-09" db="UniProtKB">
        <title>Purification and characterization of a polyphenol oxidase from the rhizome of Zingiber officinale.</title>
        <authorList>
            <person name="Joseph A."/>
            <person name="Thayumanavan B."/>
            <person name="Manickam A."/>
            <person name="Panicker P.R."/>
        </authorList>
    </citation>
    <scope>PROTEIN SEQUENCE</scope>
    <scope>FUNCTION</scope>
    <scope>CATALYTIC ACTIVITY</scope>
    <scope>BIOPHYSICOCHEMICAL PROPERTIES</scope>
    <scope>SUBUNIT</scope>
    <scope>TISSUE SPECIFICITY</scope>
    <scope>DEVELOPMENTAL STAGE</scope>
    <scope>GLYCOSYLATION</scope>
    <source>
        <tissue evidence="2">Rhizome</tissue>
    </source>
</reference>
<dbReference type="EC" id="1.10.3.1"/>
<dbReference type="GO" id="GO:0004097">
    <property type="term" value="F:catechol oxidase activity"/>
    <property type="evidence" value="ECO:0007669"/>
    <property type="project" value="UniProtKB-EC"/>
</dbReference>
<dbReference type="GO" id="GO:0046872">
    <property type="term" value="F:metal ion binding"/>
    <property type="evidence" value="ECO:0007669"/>
    <property type="project" value="UniProtKB-KW"/>
</dbReference>
<accession>P85026</accession>
<evidence type="ECO:0000250" key="1">
    <source>
        <dbReference type="UniProtKB" id="Q9ZP19"/>
    </source>
</evidence>
<evidence type="ECO:0000269" key="2">
    <source ref="1"/>
</evidence>
<evidence type="ECO:0000303" key="3">
    <source ref="1"/>
</evidence>
<evidence type="ECO:0000305" key="4"/>